<protein>
    <recommendedName>
        <fullName>Phycobilisome degradation protein NblA</fullName>
    </recommendedName>
</protein>
<keyword id="KW-0002">3D-structure</keyword>
<keyword id="KW-1185">Reference proteome</keyword>
<feature type="chain" id="PRO_0000096744" description="Phycobilisome degradation protein NblA">
    <location>
        <begin position="1"/>
        <end position="59"/>
    </location>
</feature>
<feature type="mutagenesis site" description="Nonbleaching colonies during sulfur deprivation." evidence="1">
    <original>S</original>
    <variation>F</variation>
    <location>
        <position position="9"/>
    </location>
</feature>
<feature type="helix" evidence="4">
    <location>
        <begin position="13"/>
        <end position="23"/>
    </location>
</feature>
<feature type="strand" evidence="4">
    <location>
        <begin position="26"/>
        <end position="28"/>
    </location>
</feature>
<feature type="helix" evidence="4">
    <location>
        <begin position="31"/>
        <end position="33"/>
    </location>
</feature>
<feature type="helix" evidence="4">
    <location>
        <begin position="35"/>
        <end position="38"/>
    </location>
</feature>
<feature type="helix" evidence="4">
    <location>
        <begin position="40"/>
        <end position="55"/>
    </location>
</feature>
<feature type="turn" evidence="4">
    <location>
        <begin position="56"/>
        <end position="58"/>
    </location>
</feature>
<dbReference type="EMBL" id="U05044">
    <property type="protein sequence ID" value="AAA89103.1"/>
    <property type="molecule type" value="Genomic_DNA"/>
</dbReference>
<dbReference type="EMBL" id="CP000100">
    <property type="protein sequence ID" value="ABB58157.1"/>
    <property type="molecule type" value="Genomic_DNA"/>
</dbReference>
<dbReference type="PIR" id="S42636">
    <property type="entry name" value="S42636"/>
</dbReference>
<dbReference type="RefSeq" id="WP_011378330.1">
    <property type="nucleotide sequence ID" value="NZ_JACJTX010000001.1"/>
</dbReference>
<dbReference type="PDB" id="3CS5">
    <property type="method" value="X-ray"/>
    <property type="resolution" value="2.20 A"/>
    <property type="chains" value="A/B/C/D=1-59"/>
</dbReference>
<dbReference type="PDBsum" id="3CS5"/>
<dbReference type="SMR" id="P35087"/>
<dbReference type="STRING" id="1140.Synpcc7942_2127"/>
<dbReference type="PaxDb" id="1140-Synpcc7942_2127"/>
<dbReference type="KEGG" id="syf:Synpcc7942_2127"/>
<dbReference type="eggNOG" id="ENOG502ZR1B">
    <property type="taxonomic scope" value="Bacteria"/>
</dbReference>
<dbReference type="HOGENOM" id="CLU_185251_1_0_3"/>
<dbReference type="OrthoDB" id="9930648at2"/>
<dbReference type="BioCyc" id="SYNEL:SYNPCC7942_2127-MONOMER"/>
<dbReference type="EvolutionaryTrace" id="P35087"/>
<dbReference type="Proteomes" id="UP000889800">
    <property type="component" value="Chromosome"/>
</dbReference>
<dbReference type="Gene3D" id="1.10.287.670">
    <property type="entry name" value="Phycobilisome degradation protein NblA"/>
    <property type="match status" value="1"/>
</dbReference>
<dbReference type="InterPro" id="IPR007574">
    <property type="entry name" value="NblA"/>
</dbReference>
<dbReference type="InterPro" id="IPR036904">
    <property type="entry name" value="NblA_sf"/>
</dbReference>
<dbReference type="NCBIfam" id="NF045916">
    <property type="entry name" value="PhycobilmeDegNblA"/>
    <property type="match status" value="1"/>
</dbReference>
<dbReference type="Pfam" id="PF04485">
    <property type="entry name" value="NblA"/>
    <property type="match status" value="1"/>
</dbReference>
<dbReference type="SUPFAM" id="SSF109859">
    <property type="entry name" value="NblA-like"/>
    <property type="match status" value="1"/>
</dbReference>
<gene>
    <name evidence="2" type="primary">nblA</name>
    <name type="ordered locus">Synpcc7942_2127</name>
</gene>
<accession>P35087</accession>
<accession>Q31LB2</accession>
<evidence type="ECO:0000269" key="1">
    <source>
    </source>
</evidence>
<evidence type="ECO:0000303" key="2">
    <source>
    </source>
</evidence>
<evidence type="ECO:0000305" key="3"/>
<evidence type="ECO:0007829" key="4">
    <source>
        <dbReference type="PDB" id="3CS5"/>
    </source>
</evidence>
<sequence>MLPPLPDFSLSVEQQFDLQKYRQQVRDISREDLEDLFIEVVRQKMAHENIFKGMIRQGS</sequence>
<name>NBLA_SYNE7</name>
<organism>
    <name type="scientific">Synechococcus elongatus (strain ATCC 33912 / PCC 7942 / FACHB-805)</name>
    <name type="common">Anacystis nidulans R2</name>
    <dbReference type="NCBI Taxonomy" id="1140"/>
    <lineage>
        <taxon>Bacteria</taxon>
        <taxon>Bacillati</taxon>
        <taxon>Cyanobacteriota</taxon>
        <taxon>Cyanophyceae</taxon>
        <taxon>Synechococcales</taxon>
        <taxon>Synechococcaceae</taxon>
        <taxon>Synechococcus</taxon>
    </lineage>
</organism>
<reference key="1">
    <citation type="journal article" date="1994" name="EMBO J.">
        <title>A small polypeptide triggers complete degradation of light-harvesting phycobiliproteins in nutrient-deprived cyanobacteria.</title>
        <authorList>
            <person name="Collier J.L."/>
            <person name="Grossman A.R."/>
        </authorList>
    </citation>
    <scope>NUCLEOTIDE SEQUENCE [GENOMIC DNA]</scope>
    <scope>FUNCTION</scope>
    <scope>INDUCTION</scope>
    <scope>MUTAGENESIS OF SER-9</scope>
</reference>
<reference key="2">
    <citation type="submission" date="2005-08" db="EMBL/GenBank/DDBJ databases">
        <title>Complete sequence of chromosome 1 of Synechococcus elongatus PCC 7942.</title>
        <authorList>
            <consortium name="US DOE Joint Genome Institute"/>
            <person name="Copeland A."/>
            <person name="Lucas S."/>
            <person name="Lapidus A."/>
            <person name="Barry K."/>
            <person name="Detter J.C."/>
            <person name="Glavina T."/>
            <person name="Hammon N."/>
            <person name="Israni S."/>
            <person name="Pitluck S."/>
            <person name="Schmutz J."/>
            <person name="Larimer F."/>
            <person name="Land M."/>
            <person name="Kyrpides N."/>
            <person name="Lykidis A."/>
            <person name="Golden S."/>
            <person name="Richardson P."/>
        </authorList>
    </citation>
    <scope>NUCLEOTIDE SEQUENCE [LARGE SCALE GENOMIC DNA]</scope>
    <source>
        <strain>ATCC 33912 / PCC 7942 / FACHB-805</strain>
    </source>
</reference>
<comment type="function">
    <text evidence="1">Involved in phycobilisome (PBS) degradation during nutrient deprivation (PubMed:8131738). May mark the PBS for degradation by covalent association with PBS components or may disrupt the PBS via ionic interactions (PubMed:8131738).</text>
</comment>
<comment type="induction">
    <text evidence="1">Present at very low levels in nutrient-replete cells, and at 50-fold higher levels in nitrogen- or sulfur-deprived cells and to a variable extent (&lt;10-fold) during phosphorus deprivation.</text>
</comment>
<comment type="similarity">
    <text evidence="3">To chloroplast ycf18.</text>
</comment>
<proteinExistence type="evidence at protein level"/>